<accession>Q58832</accession>
<proteinExistence type="inferred from homology"/>
<comment type="function">
    <text evidence="1">Catalyzes the dephosphorylation of D,L-glyceraldehyde 3-phosphate in vitro.</text>
</comment>
<comment type="cofactor">
    <cofactor evidence="1">
        <name>Mg(2+)</name>
        <dbReference type="ChEBI" id="CHEBI:18420"/>
    </cofactor>
</comment>
<comment type="similarity">
    <text evidence="3">Belongs to the HAD-like hydrolase superfamily.</text>
</comment>
<organism>
    <name type="scientific">Methanocaldococcus jannaschii (strain ATCC 43067 / DSM 2661 / JAL-1 / JCM 10045 / NBRC 100440)</name>
    <name type="common">Methanococcus jannaschii</name>
    <dbReference type="NCBI Taxonomy" id="243232"/>
    <lineage>
        <taxon>Archaea</taxon>
        <taxon>Methanobacteriati</taxon>
        <taxon>Methanobacteriota</taxon>
        <taxon>Methanomada group</taxon>
        <taxon>Methanococci</taxon>
        <taxon>Methanococcales</taxon>
        <taxon>Methanocaldococcaceae</taxon>
        <taxon>Methanocaldococcus</taxon>
    </lineage>
</organism>
<evidence type="ECO:0000269" key="1">
    <source>
    </source>
</evidence>
<evidence type="ECO:0000303" key="2">
    <source>
    </source>
</evidence>
<evidence type="ECO:0000305" key="3"/>
<evidence type="ECO:0000305" key="4">
    <source>
    </source>
</evidence>
<reference key="1">
    <citation type="journal article" date="1996" name="Science">
        <title>Complete genome sequence of the methanogenic archaeon, Methanococcus jannaschii.</title>
        <authorList>
            <person name="Bult C.J."/>
            <person name="White O."/>
            <person name="Olsen G.J."/>
            <person name="Zhou L."/>
            <person name="Fleischmann R.D."/>
            <person name="Sutton G.G."/>
            <person name="Blake J.A."/>
            <person name="FitzGerald L.M."/>
            <person name="Clayton R.A."/>
            <person name="Gocayne J.D."/>
            <person name="Kerlavage A.R."/>
            <person name="Dougherty B.A."/>
            <person name="Tomb J.-F."/>
            <person name="Adams M.D."/>
            <person name="Reich C.I."/>
            <person name="Overbeek R."/>
            <person name="Kirkness E.F."/>
            <person name="Weinstock K.G."/>
            <person name="Merrick J.M."/>
            <person name="Glodek A."/>
            <person name="Scott J.L."/>
            <person name="Geoghagen N.S.M."/>
            <person name="Weidman J.F."/>
            <person name="Fuhrmann J.L."/>
            <person name="Nguyen D."/>
            <person name="Utterback T.R."/>
            <person name="Kelley J.M."/>
            <person name="Peterson J.D."/>
            <person name="Sadow P.W."/>
            <person name="Hanna M.C."/>
            <person name="Cotton M.D."/>
            <person name="Roberts K.M."/>
            <person name="Hurst M.A."/>
            <person name="Kaine B.P."/>
            <person name="Borodovsky M."/>
            <person name="Klenk H.-P."/>
            <person name="Fraser C.M."/>
            <person name="Smith H.O."/>
            <person name="Woese C.R."/>
            <person name="Venter J.C."/>
        </authorList>
    </citation>
    <scope>NUCLEOTIDE SEQUENCE [LARGE SCALE GENOMIC DNA]</scope>
    <source>
        <strain>ATCC 43067 / DSM 2661 / JAL-1 / JCM 10045 / NBRC 100440</strain>
    </source>
</reference>
<reference key="2">
    <citation type="journal article" date="2015" name="Proc. Natl. Acad. Sci. U.S.A.">
        <title>Panoramic view of a superfamily of phosphatases through substrate profiling.</title>
        <authorList>
            <person name="Huang H."/>
            <person name="Pandya C."/>
            <person name="Liu C."/>
            <person name="Al-Obaidi N.F."/>
            <person name="Wang M."/>
            <person name="Zheng L."/>
            <person name="Toews Keating S."/>
            <person name="Aono M."/>
            <person name="Love J.D."/>
            <person name="Evans B."/>
            <person name="Seidel R.D."/>
            <person name="Hillerich B.S."/>
            <person name="Garforth S.J."/>
            <person name="Almo S.C."/>
            <person name="Mariano P.S."/>
            <person name="Dunaway-Mariano D."/>
            <person name="Allen K.N."/>
            <person name="Farelli J.D."/>
        </authorList>
    </citation>
    <scope>FUNCTION</scope>
    <scope>COFACTOR</scope>
</reference>
<dbReference type="EC" id="3.1.3.-" evidence="4"/>
<dbReference type="EMBL" id="L77117">
    <property type="protein sequence ID" value="AAB99446.1"/>
    <property type="molecule type" value="Genomic_DNA"/>
</dbReference>
<dbReference type="PIR" id="D64479">
    <property type="entry name" value="D64479"/>
</dbReference>
<dbReference type="RefSeq" id="WP_010870955.1">
    <property type="nucleotide sequence ID" value="NC_000909.1"/>
</dbReference>
<dbReference type="SMR" id="Q58832"/>
<dbReference type="FunCoup" id="Q58832">
    <property type="interactions" value="31"/>
</dbReference>
<dbReference type="STRING" id="243232.MJ_1437"/>
<dbReference type="PaxDb" id="243232-MJ_1437"/>
<dbReference type="DNASU" id="1452341"/>
<dbReference type="EnsemblBacteria" id="AAB99446">
    <property type="protein sequence ID" value="AAB99446"/>
    <property type="gene ID" value="MJ_1437"/>
</dbReference>
<dbReference type="GeneID" id="1452341"/>
<dbReference type="KEGG" id="mja:MJ_1437"/>
<dbReference type="eggNOG" id="arCOG02291">
    <property type="taxonomic scope" value="Archaea"/>
</dbReference>
<dbReference type="HOGENOM" id="CLU_045011_8_3_2"/>
<dbReference type="InParanoid" id="Q58832"/>
<dbReference type="OrthoDB" id="27736at2157"/>
<dbReference type="PhylomeDB" id="Q58832"/>
<dbReference type="Proteomes" id="UP000000805">
    <property type="component" value="Chromosome"/>
</dbReference>
<dbReference type="GO" id="GO:0046872">
    <property type="term" value="F:metal ion binding"/>
    <property type="evidence" value="ECO:0007669"/>
    <property type="project" value="UniProtKB-KW"/>
</dbReference>
<dbReference type="GO" id="GO:0016791">
    <property type="term" value="F:phosphatase activity"/>
    <property type="evidence" value="ECO:0000318"/>
    <property type="project" value="GO_Central"/>
</dbReference>
<dbReference type="GO" id="GO:0044283">
    <property type="term" value="P:small molecule biosynthetic process"/>
    <property type="evidence" value="ECO:0007669"/>
    <property type="project" value="UniProtKB-ARBA"/>
</dbReference>
<dbReference type="CDD" id="cd04305">
    <property type="entry name" value="HAD_Neu5Ac-Pase_like"/>
    <property type="match status" value="1"/>
</dbReference>
<dbReference type="Gene3D" id="1.10.150.520">
    <property type="match status" value="1"/>
</dbReference>
<dbReference type="Gene3D" id="3.40.50.1000">
    <property type="entry name" value="HAD superfamily/HAD-like"/>
    <property type="match status" value="1"/>
</dbReference>
<dbReference type="InterPro" id="IPR051400">
    <property type="entry name" value="HAD-like_hydrolase"/>
</dbReference>
<dbReference type="InterPro" id="IPR036412">
    <property type="entry name" value="HAD-like_sf"/>
</dbReference>
<dbReference type="InterPro" id="IPR006439">
    <property type="entry name" value="HAD-SF_hydro_IA"/>
</dbReference>
<dbReference type="InterPro" id="IPR011950">
    <property type="entry name" value="HAD-SF_hydro_IA_CTE7"/>
</dbReference>
<dbReference type="InterPro" id="IPR041492">
    <property type="entry name" value="HAD_2"/>
</dbReference>
<dbReference type="InterPro" id="IPR023214">
    <property type="entry name" value="HAD_sf"/>
</dbReference>
<dbReference type="NCBIfam" id="TIGR02253">
    <property type="entry name" value="CTE7"/>
    <property type="match status" value="1"/>
</dbReference>
<dbReference type="NCBIfam" id="TIGR01549">
    <property type="entry name" value="HAD-SF-IA-v1"/>
    <property type="match status" value="1"/>
</dbReference>
<dbReference type="NCBIfam" id="TIGR01509">
    <property type="entry name" value="HAD-SF-IA-v3"/>
    <property type="match status" value="1"/>
</dbReference>
<dbReference type="PANTHER" id="PTHR46470:SF2">
    <property type="entry name" value="GLYCERALDEHYDE 3-PHOSPHATE PHOSPHATASE"/>
    <property type="match status" value="1"/>
</dbReference>
<dbReference type="PANTHER" id="PTHR46470">
    <property type="entry name" value="N-ACYLNEURAMINATE-9-PHOSPHATASE"/>
    <property type="match status" value="1"/>
</dbReference>
<dbReference type="Pfam" id="PF13419">
    <property type="entry name" value="HAD_2"/>
    <property type="match status" value="1"/>
</dbReference>
<dbReference type="PRINTS" id="PR00413">
    <property type="entry name" value="HADHALOGNASE"/>
</dbReference>
<dbReference type="SFLD" id="SFLDG01129">
    <property type="entry name" value="C1.5:_HAD__Beta-PGM__Phosphata"/>
    <property type="match status" value="1"/>
</dbReference>
<dbReference type="SFLD" id="SFLDS00003">
    <property type="entry name" value="Haloacid_Dehalogenase"/>
    <property type="match status" value="1"/>
</dbReference>
<dbReference type="SUPFAM" id="SSF56784">
    <property type="entry name" value="HAD-like"/>
    <property type="match status" value="1"/>
</dbReference>
<name>G3PP_METJA</name>
<sequence>MIKGILFDLDDTLYNSSEFVEIARREAVKSMIDAGLNIDFEEAMNILNKIIKDKGSNYGKHFDDLVKAVLGKYDPKIITTGIITYHNVKVALLRPYPHTIKTLMELKAMGLKLGVITDGLTIKQWEKLIRLGIHPFFDDVITSEEFGLGKPHLEFFKYGLKRMGLKAEETVYVGDRVDKDIKPAKELGMITVRILKGKYKDMEDDEYSDYTINSLQELVDIVKNLKKD</sequence>
<gene>
    <name type="ordered locus">MJ1437</name>
</gene>
<feature type="chain" id="PRO_0000107329" description="Glyceraldehyde 3-phosphate phosphatase">
    <location>
        <begin position="1"/>
        <end position="228"/>
    </location>
</feature>
<protein>
    <recommendedName>
        <fullName evidence="2">Glyceraldehyde 3-phosphate phosphatase</fullName>
        <ecNumber evidence="4">3.1.3.-</ecNumber>
    </recommendedName>
</protein>
<keyword id="KW-0378">Hydrolase</keyword>
<keyword id="KW-0460">Magnesium</keyword>
<keyword id="KW-0479">Metal-binding</keyword>
<keyword id="KW-1185">Reference proteome</keyword>